<keyword id="KW-0472">Membrane</keyword>
<keyword id="KW-1185">Reference proteome</keyword>
<keyword id="KW-0812">Transmembrane</keyword>
<keyword id="KW-1133">Transmembrane helix</keyword>
<feature type="chain" id="PRO_0000317638" description="Histidine-rich carboxyl terminus protein 1">
    <location>
        <begin position="1"/>
        <end position="115"/>
    </location>
</feature>
<feature type="transmembrane region" description="Helical" evidence="1">
    <location>
        <begin position="9"/>
        <end position="29"/>
    </location>
</feature>
<feature type="region of interest" description="Disordered" evidence="2">
    <location>
        <begin position="86"/>
        <end position="115"/>
    </location>
</feature>
<feature type="compositionally biased region" description="Basic residues" evidence="2">
    <location>
        <begin position="87"/>
        <end position="115"/>
    </location>
</feature>
<evidence type="ECO:0000255" key="1"/>
<evidence type="ECO:0000256" key="2">
    <source>
        <dbReference type="SAM" id="MobiDB-lite"/>
    </source>
</evidence>
<evidence type="ECO:0000305" key="3"/>
<dbReference type="EMBL" id="AY358408">
    <property type="protein sequence ID" value="AAQ88774.1"/>
    <property type="molecule type" value="mRNA"/>
</dbReference>
<dbReference type="EMBL" id="AL135841">
    <property type="status" value="NOT_ANNOTATED_CDS"/>
    <property type="molecule type" value="Genomic_DNA"/>
</dbReference>
<dbReference type="CCDS" id="CCDS35012.1"/>
<dbReference type="RefSeq" id="NP_001034881.1">
    <property type="nucleotide sequence ID" value="NM_001039792.2"/>
</dbReference>
<dbReference type="SMR" id="Q6UXD1"/>
<dbReference type="BioGRID" id="571767">
    <property type="interactions" value="1"/>
</dbReference>
<dbReference type="FunCoup" id="Q6UXD1">
    <property type="interactions" value="2"/>
</dbReference>
<dbReference type="STRING" id="9606.ENSP00000346283"/>
<dbReference type="BioMuta" id="HRCT1"/>
<dbReference type="DMDM" id="74738206"/>
<dbReference type="PaxDb" id="9606-ENSP00000346283"/>
<dbReference type="PeptideAtlas" id="Q6UXD1"/>
<dbReference type="Antibodypedia" id="78136">
    <property type="antibodies" value="5 antibodies from 5 providers"/>
</dbReference>
<dbReference type="DNASU" id="646962"/>
<dbReference type="Ensembl" id="ENST00000354323.3">
    <property type="protein sequence ID" value="ENSP00000346283.2"/>
    <property type="gene ID" value="ENSG00000196196.3"/>
</dbReference>
<dbReference type="GeneID" id="646962"/>
<dbReference type="KEGG" id="hsa:646962"/>
<dbReference type="MANE-Select" id="ENST00000354323.3">
    <property type="protein sequence ID" value="ENSP00000346283.2"/>
    <property type="RefSeq nucleotide sequence ID" value="NM_001039792.2"/>
    <property type="RefSeq protein sequence ID" value="NP_001034881.1"/>
</dbReference>
<dbReference type="UCSC" id="uc003zyr.1">
    <property type="organism name" value="human"/>
</dbReference>
<dbReference type="AGR" id="HGNC:33872"/>
<dbReference type="CTD" id="646962"/>
<dbReference type="DisGeNET" id="646962"/>
<dbReference type="GeneCards" id="HRCT1"/>
<dbReference type="HGNC" id="HGNC:33872">
    <property type="gene designation" value="HRCT1"/>
</dbReference>
<dbReference type="HPA" id="ENSG00000196196">
    <property type="expression patterns" value="Tissue enhanced (adipose tissue, breast)"/>
</dbReference>
<dbReference type="neXtProt" id="NX_Q6UXD1"/>
<dbReference type="OpenTargets" id="ENSG00000196196"/>
<dbReference type="PharmGKB" id="PA164720718"/>
<dbReference type="VEuPathDB" id="HostDB:ENSG00000196196"/>
<dbReference type="eggNOG" id="ENOG502SX6E">
    <property type="taxonomic scope" value="Eukaryota"/>
</dbReference>
<dbReference type="GeneTree" id="ENSGT00510000049544"/>
<dbReference type="HOGENOM" id="CLU_177134_0_0_1"/>
<dbReference type="InParanoid" id="Q6UXD1"/>
<dbReference type="OMA" id="QPWPFRR"/>
<dbReference type="OrthoDB" id="9685540at2759"/>
<dbReference type="PAN-GO" id="Q6UXD1">
    <property type="GO annotations" value="0 GO annotations based on evolutionary models"/>
</dbReference>
<dbReference type="PhylomeDB" id="Q6UXD1"/>
<dbReference type="PathwayCommons" id="Q6UXD1"/>
<dbReference type="BioGRID-ORCS" id="646962">
    <property type="hits" value="14 hits in 1138 CRISPR screens"/>
</dbReference>
<dbReference type="GenomeRNAi" id="646962"/>
<dbReference type="Pharos" id="Q6UXD1">
    <property type="development level" value="Tdark"/>
</dbReference>
<dbReference type="PRO" id="PR:Q6UXD1"/>
<dbReference type="Proteomes" id="UP000005640">
    <property type="component" value="Chromosome 9"/>
</dbReference>
<dbReference type="RNAct" id="Q6UXD1">
    <property type="molecule type" value="protein"/>
</dbReference>
<dbReference type="Bgee" id="ENSG00000196196">
    <property type="expression patterns" value="Expressed in mucosa of transverse colon and 118 other cell types or tissues"/>
</dbReference>
<dbReference type="GO" id="GO:0016020">
    <property type="term" value="C:membrane"/>
    <property type="evidence" value="ECO:0007669"/>
    <property type="project" value="UniProtKB-SubCell"/>
</dbReference>
<dbReference type="InterPro" id="IPR031506">
    <property type="entry name" value="HRCT1"/>
</dbReference>
<dbReference type="PANTHER" id="PTHR23009">
    <property type="match status" value="1"/>
</dbReference>
<dbReference type="PANTHER" id="PTHR23009:SF2">
    <property type="entry name" value="HISTIDINE-RICH CARBOXYL TERMINUS PROTEIN 1"/>
    <property type="match status" value="1"/>
</dbReference>
<dbReference type="Pfam" id="PF15758">
    <property type="entry name" value="HRCT1"/>
    <property type="match status" value="1"/>
</dbReference>
<comment type="subcellular location">
    <subcellularLocation>
        <location evidence="3">Membrane</location>
        <topology evidence="3">Single-pass membrane protein</topology>
    </subcellularLocation>
</comment>
<name>HRCT1_HUMAN</name>
<organism>
    <name type="scientific">Homo sapiens</name>
    <name type="common">Human</name>
    <dbReference type="NCBI Taxonomy" id="9606"/>
    <lineage>
        <taxon>Eukaryota</taxon>
        <taxon>Metazoa</taxon>
        <taxon>Chordata</taxon>
        <taxon>Craniata</taxon>
        <taxon>Vertebrata</taxon>
        <taxon>Euteleostomi</taxon>
        <taxon>Mammalia</taxon>
        <taxon>Eutheria</taxon>
        <taxon>Euarchontoglires</taxon>
        <taxon>Primates</taxon>
        <taxon>Haplorrhini</taxon>
        <taxon>Catarrhini</taxon>
        <taxon>Hominidae</taxon>
        <taxon>Homo</taxon>
    </lineage>
</organism>
<sequence length="115" mass="13183">MLGLLGSTALVGWITGAAVAVLLLLLLLATCLFHGRQDCDVERNRTAAGGNRVRRAQPWPFRRRGHLGIFHHHRHPGHVSHVPNVGLHHHHHPRHTPHHLHHHHHPHRHHPRHAR</sequence>
<reference key="1">
    <citation type="journal article" date="2003" name="Genome Res.">
        <title>The secreted protein discovery initiative (SPDI), a large-scale effort to identify novel human secreted and transmembrane proteins: a bioinformatics assessment.</title>
        <authorList>
            <person name="Clark H.F."/>
            <person name="Gurney A.L."/>
            <person name="Abaya E."/>
            <person name="Baker K."/>
            <person name="Baldwin D.T."/>
            <person name="Brush J."/>
            <person name="Chen J."/>
            <person name="Chow B."/>
            <person name="Chui C."/>
            <person name="Crowley C."/>
            <person name="Currell B."/>
            <person name="Deuel B."/>
            <person name="Dowd P."/>
            <person name="Eaton D."/>
            <person name="Foster J.S."/>
            <person name="Grimaldi C."/>
            <person name="Gu Q."/>
            <person name="Hass P.E."/>
            <person name="Heldens S."/>
            <person name="Huang A."/>
            <person name="Kim H.S."/>
            <person name="Klimowski L."/>
            <person name="Jin Y."/>
            <person name="Johnson S."/>
            <person name="Lee J."/>
            <person name="Lewis L."/>
            <person name="Liao D."/>
            <person name="Mark M.R."/>
            <person name="Robbie E."/>
            <person name="Sanchez C."/>
            <person name="Schoenfeld J."/>
            <person name="Seshagiri S."/>
            <person name="Simmons L."/>
            <person name="Singh J."/>
            <person name="Smith V."/>
            <person name="Stinson J."/>
            <person name="Vagts A."/>
            <person name="Vandlen R.L."/>
            <person name="Watanabe C."/>
            <person name="Wieand D."/>
            <person name="Woods K."/>
            <person name="Xie M.-H."/>
            <person name="Yansura D.G."/>
            <person name="Yi S."/>
            <person name="Yu G."/>
            <person name="Yuan J."/>
            <person name="Zhang M."/>
            <person name="Zhang Z."/>
            <person name="Goddard A.D."/>
            <person name="Wood W.I."/>
            <person name="Godowski P.J."/>
            <person name="Gray A.M."/>
        </authorList>
    </citation>
    <scope>NUCLEOTIDE SEQUENCE [LARGE SCALE MRNA]</scope>
</reference>
<reference key="2">
    <citation type="journal article" date="2004" name="Nature">
        <title>DNA sequence and analysis of human chromosome 9.</title>
        <authorList>
            <person name="Humphray S.J."/>
            <person name="Oliver K."/>
            <person name="Hunt A.R."/>
            <person name="Plumb R.W."/>
            <person name="Loveland J.E."/>
            <person name="Howe K.L."/>
            <person name="Andrews T.D."/>
            <person name="Searle S."/>
            <person name="Hunt S.E."/>
            <person name="Scott C.E."/>
            <person name="Jones M.C."/>
            <person name="Ainscough R."/>
            <person name="Almeida J.P."/>
            <person name="Ambrose K.D."/>
            <person name="Ashwell R.I.S."/>
            <person name="Babbage A.K."/>
            <person name="Babbage S."/>
            <person name="Bagguley C.L."/>
            <person name="Bailey J."/>
            <person name="Banerjee R."/>
            <person name="Barker D.J."/>
            <person name="Barlow K.F."/>
            <person name="Bates K."/>
            <person name="Beasley H."/>
            <person name="Beasley O."/>
            <person name="Bird C.P."/>
            <person name="Bray-Allen S."/>
            <person name="Brown A.J."/>
            <person name="Brown J.Y."/>
            <person name="Burford D."/>
            <person name="Burrill W."/>
            <person name="Burton J."/>
            <person name="Carder C."/>
            <person name="Carter N.P."/>
            <person name="Chapman J.C."/>
            <person name="Chen Y."/>
            <person name="Clarke G."/>
            <person name="Clark S.Y."/>
            <person name="Clee C.M."/>
            <person name="Clegg S."/>
            <person name="Collier R.E."/>
            <person name="Corby N."/>
            <person name="Crosier M."/>
            <person name="Cummings A.T."/>
            <person name="Davies J."/>
            <person name="Dhami P."/>
            <person name="Dunn M."/>
            <person name="Dutta I."/>
            <person name="Dyer L.W."/>
            <person name="Earthrowl M.E."/>
            <person name="Faulkner L."/>
            <person name="Fleming C.J."/>
            <person name="Frankish A."/>
            <person name="Frankland J.A."/>
            <person name="French L."/>
            <person name="Fricker D.G."/>
            <person name="Garner P."/>
            <person name="Garnett J."/>
            <person name="Ghori J."/>
            <person name="Gilbert J.G.R."/>
            <person name="Glison C."/>
            <person name="Grafham D.V."/>
            <person name="Gribble S."/>
            <person name="Griffiths C."/>
            <person name="Griffiths-Jones S."/>
            <person name="Grocock R."/>
            <person name="Guy J."/>
            <person name="Hall R.E."/>
            <person name="Hammond S."/>
            <person name="Harley J.L."/>
            <person name="Harrison E.S.I."/>
            <person name="Hart E.A."/>
            <person name="Heath P.D."/>
            <person name="Henderson C.D."/>
            <person name="Hopkins B.L."/>
            <person name="Howard P.J."/>
            <person name="Howden P.J."/>
            <person name="Huckle E."/>
            <person name="Johnson C."/>
            <person name="Johnson D."/>
            <person name="Joy A.A."/>
            <person name="Kay M."/>
            <person name="Keenan S."/>
            <person name="Kershaw J.K."/>
            <person name="Kimberley A.M."/>
            <person name="King A."/>
            <person name="Knights A."/>
            <person name="Laird G.K."/>
            <person name="Langford C."/>
            <person name="Lawlor S."/>
            <person name="Leongamornlert D.A."/>
            <person name="Leversha M."/>
            <person name="Lloyd C."/>
            <person name="Lloyd D.M."/>
            <person name="Lovell J."/>
            <person name="Martin S."/>
            <person name="Mashreghi-Mohammadi M."/>
            <person name="Matthews L."/>
            <person name="McLaren S."/>
            <person name="McLay K.E."/>
            <person name="McMurray A."/>
            <person name="Milne S."/>
            <person name="Nickerson T."/>
            <person name="Nisbett J."/>
            <person name="Nordsiek G."/>
            <person name="Pearce A.V."/>
            <person name="Peck A.I."/>
            <person name="Porter K.M."/>
            <person name="Pandian R."/>
            <person name="Pelan S."/>
            <person name="Phillimore B."/>
            <person name="Povey S."/>
            <person name="Ramsey Y."/>
            <person name="Rand V."/>
            <person name="Scharfe M."/>
            <person name="Sehra H.K."/>
            <person name="Shownkeen R."/>
            <person name="Sims S.K."/>
            <person name="Skuce C.D."/>
            <person name="Smith M."/>
            <person name="Steward C.A."/>
            <person name="Swarbreck D."/>
            <person name="Sycamore N."/>
            <person name="Tester J."/>
            <person name="Thorpe A."/>
            <person name="Tracey A."/>
            <person name="Tromans A."/>
            <person name="Thomas D.W."/>
            <person name="Wall M."/>
            <person name="Wallis J.M."/>
            <person name="West A.P."/>
            <person name="Whitehead S.L."/>
            <person name="Willey D.L."/>
            <person name="Williams S.A."/>
            <person name="Wilming L."/>
            <person name="Wray P.W."/>
            <person name="Young L."/>
            <person name="Ashurst J.L."/>
            <person name="Coulson A."/>
            <person name="Blocker H."/>
            <person name="Durbin R.M."/>
            <person name="Sulston J.E."/>
            <person name="Hubbard T."/>
            <person name="Jackson M.J."/>
            <person name="Bentley D.R."/>
            <person name="Beck S."/>
            <person name="Rogers J."/>
            <person name="Dunham I."/>
        </authorList>
    </citation>
    <scope>NUCLEOTIDE SEQUENCE [LARGE SCALE GENOMIC DNA]</scope>
</reference>
<protein>
    <recommendedName>
        <fullName>Histidine-rich carboxyl terminus protein 1</fullName>
    </recommendedName>
</protein>
<accession>Q6UXD1</accession>
<accession>B7ZBJ1</accession>
<proteinExistence type="predicted"/>
<gene>
    <name type="primary">HRCT1</name>
    <name type="ORF">UNQ338/PRO537</name>
</gene>